<reference key="1">
    <citation type="journal article" date="2008" name="PLoS Genet.">
        <title>Genomic islands in the pathogenic filamentous fungus Aspergillus fumigatus.</title>
        <authorList>
            <person name="Fedorova N.D."/>
            <person name="Khaldi N."/>
            <person name="Joardar V.S."/>
            <person name="Maiti R."/>
            <person name="Amedeo P."/>
            <person name="Anderson M.J."/>
            <person name="Crabtree J."/>
            <person name="Silva J.C."/>
            <person name="Badger J.H."/>
            <person name="Albarraq A."/>
            <person name="Angiuoli S."/>
            <person name="Bussey H."/>
            <person name="Bowyer P."/>
            <person name="Cotty P.J."/>
            <person name="Dyer P.S."/>
            <person name="Egan A."/>
            <person name="Galens K."/>
            <person name="Fraser-Liggett C.M."/>
            <person name="Haas B.J."/>
            <person name="Inman J.M."/>
            <person name="Kent R."/>
            <person name="Lemieux S."/>
            <person name="Malavazi I."/>
            <person name="Orvis J."/>
            <person name="Roemer T."/>
            <person name="Ronning C.M."/>
            <person name="Sundaram J.P."/>
            <person name="Sutton G."/>
            <person name="Turner G."/>
            <person name="Venter J.C."/>
            <person name="White O.R."/>
            <person name="Whitty B.R."/>
            <person name="Youngman P."/>
            <person name="Wolfe K.H."/>
            <person name="Goldman G.H."/>
            <person name="Wortman J.R."/>
            <person name="Jiang B."/>
            <person name="Denning D.W."/>
            <person name="Nierman W.C."/>
        </authorList>
    </citation>
    <scope>NUCLEOTIDE SEQUENCE [LARGE SCALE GENOMIC DNA]</scope>
    <source>
        <strain>ATCC 1007 / CBS 513.65 / DSM 816 / NCTC 3887 / NRRL 1 / QM 1276 / 107</strain>
    </source>
</reference>
<comment type="function">
    <text evidence="1">Component of the Mediator complex, a coactivator involved in the regulated transcription of nearly all RNA polymerase II-dependent genes. Mediator functions as a bridge to convey information from gene-specific regulatory proteins to the basal RNA polymerase II transcription machinery. Mediator is recruited to promoters by direct interactions with regulatory proteins and serves as a scaffold for the assembly of a functional preinitiation complex with RNA polymerase II and the general transcription factors (By similarity).</text>
</comment>
<comment type="subunit">
    <text evidence="1">Component of the Mediator complex.</text>
</comment>
<comment type="subcellular location">
    <subcellularLocation>
        <location evidence="3">Nucleus</location>
    </subcellularLocation>
</comment>
<comment type="similarity">
    <text evidence="3">Belongs to the Mediator complex subunit 16 family.</text>
</comment>
<name>MED16_ASPCL</name>
<accession>A1CQ63</accession>
<evidence type="ECO:0000250" key="1"/>
<evidence type="ECO:0000256" key="2">
    <source>
        <dbReference type="SAM" id="MobiDB-lite"/>
    </source>
</evidence>
<evidence type="ECO:0000305" key="3"/>
<feature type="chain" id="PRO_0000307624" description="Mediator of RNA polymerase II transcription subunit 16">
    <location>
        <begin position="1"/>
        <end position="957"/>
    </location>
</feature>
<feature type="region of interest" description="Disordered" evidence="2">
    <location>
        <begin position="855"/>
        <end position="883"/>
    </location>
</feature>
<protein>
    <recommendedName>
        <fullName>Mediator of RNA polymerase II transcription subunit 16</fullName>
    </recommendedName>
    <alternativeName>
        <fullName>Mediator complex subunit 16</fullName>
    </alternativeName>
</protein>
<keyword id="KW-0010">Activator</keyword>
<keyword id="KW-0539">Nucleus</keyword>
<keyword id="KW-1185">Reference proteome</keyword>
<keyword id="KW-0804">Transcription</keyword>
<keyword id="KW-0805">Transcription regulation</keyword>
<dbReference type="EMBL" id="DS027059">
    <property type="protein sequence ID" value="EAW07784.1"/>
    <property type="molecule type" value="Genomic_DNA"/>
</dbReference>
<dbReference type="RefSeq" id="XP_001269210.1">
    <property type="nucleotide sequence ID" value="XM_001269209.1"/>
</dbReference>
<dbReference type="STRING" id="344612.A1CQ63"/>
<dbReference type="EnsemblFungi" id="EAW07784">
    <property type="protein sequence ID" value="EAW07784"/>
    <property type="gene ID" value="ACLA_025000"/>
</dbReference>
<dbReference type="GeneID" id="4701712"/>
<dbReference type="KEGG" id="act:ACLA_025000"/>
<dbReference type="VEuPathDB" id="FungiDB:ACLA_025000"/>
<dbReference type="eggNOG" id="ENOG502QQU3">
    <property type="taxonomic scope" value="Eukaryota"/>
</dbReference>
<dbReference type="HOGENOM" id="CLU_007624_0_0_1"/>
<dbReference type="OMA" id="FDTTWLG"/>
<dbReference type="OrthoDB" id="4139168at2759"/>
<dbReference type="Proteomes" id="UP000006701">
    <property type="component" value="Unassembled WGS sequence"/>
</dbReference>
<dbReference type="GO" id="GO:0016592">
    <property type="term" value="C:mediator complex"/>
    <property type="evidence" value="ECO:0007669"/>
    <property type="project" value="InterPro"/>
</dbReference>
<dbReference type="GO" id="GO:0045893">
    <property type="term" value="P:positive regulation of DNA-templated transcription"/>
    <property type="evidence" value="ECO:0007669"/>
    <property type="project" value="TreeGrafter"/>
</dbReference>
<dbReference type="InterPro" id="IPR048338">
    <property type="entry name" value="Mediator_Med16"/>
</dbReference>
<dbReference type="InterPro" id="IPR048339">
    <property type="entry name" value="Mediator_Med16_C"/>
</dbReference>
<dbReference type="InterPro" id="IPR021665">
    <property type="entry name" value="Mediator_Med16_N"/>
</dbReference>
<dbReference type="InterPro" id="IPR036322">
    <property type="entry name" value="WD40_repeat_dom_sf"/>
</dbReference>
<dbReference type="PANTHER" id="PTHR13224:SF6">
    <property type="entry name" value="MEDIATOR OF RNA POLYMERASE II TRANSCRIPTION SUBUNIT 16"/>
    <property type="match status" value="1"/>
</dbReference>
<dbReference type="PANTHER" id="PTHR13224">
    <property type="entry name" value="THYROID HORMONE RECEPTOR-ASSOCIATED PROTEIN-RELATED"/>
    <property type="match status" value="1"/>
</dbReference>
<dbReference type="Pfam" id="PF20719">
    <property type="entry name" value="Med16_C"/>
    <property type="match status" value="1"/>
</dbReference>
<dbReference type="Pfam" id="PF11635">
    <property type="entry name" value="Med16_N"/>
    <property type="match status" value="1"/>
</dbReference>
<dbReference type="SUPFAM" id="SSF50978">
    <property type="entry name" value="WD40 repeat-like"/>
    <property type="match status" value="1"/>
</dbReference>
<gene>
    <name type="primary">sin4</name>
    <name type="synonym">med16</name>
    <name type="ORF">ACLA_025000</name>
</gene>
<organism>
    <name type="scientific">Aspergillus clavatus (strain ATCC 1007 / CBS 513.65 / DSM 816 / NCTC 3887 / NRRL 1 / QM 1276 / 107)</name>
    <dbReference type="NCBI Taxonomy" id="344612"/>
    <lineage>
        <taxon>Eukaryota</taxon>
        <taxon>Fungi</taxon>
        <taxon>Dikarya</taxon>
        <taxon>Ascomycota</taxon>
        <taxon>Pezizomycotina</taxon>
        <taxon>Eurotiomycetes</taxon>
        <taxon>Eurotiomycetidae</taxon>
        <taxon>Eurotiales</taxon>
        <taxon>Aspergillaceae</taxon>
        <taxon>Aspergillus</taxon>
        <taxon>Aspergillus subgen. Fumigati</taxon>
    </lineage>
</organism>
<proteinExistence type="inferred from homology"/>
<sequence>MPLIMEDGINVDDLFGEPGSLELGLSPPSNAPIKGLPQRLDEMRLVGCCQKIAWSRLGCVAYITPDGMRVNVRHLQCRPSDGKWVLSEDTPLLPVTEAHGGHPLVHLCWNETGAELAVADSSGRVSIYSISIALNSIAGHRQATSDPDDDGAQIVGMMWLNVNRVVHAFHQAAKVQGRWAYSPFRRRPIGPFHPVNKAGLVCVTRSGTIRLLYQNPDSRWAEISTELKNTGYSDRLLTHAALVSTQGGVLVATHSACQKLCLYRVQIAWNPTQYDPGQQKPPAPWPVPSFRFLHCKVESLCDVIGTNRNPGDNQGLPSFTNSVYGLTRLDIILPALDNPAGSTSTPWIVAVYSSPLHATPDHPQQQSPASVIVRWQLDTGAVTLHPKFDEVGSKKSSAQMKPKLELRRLEDIYSDRYAISIDQIEYGNVLAITYEDGSIVFHDPKTMAVFNGVDDTNTVTSLAQAGFHYPPEASGLHMAFSPNACAAVMLDAEGQTQLRLTEHTYGAEGGLHDENKYSAAIAALTLAFCRGCGSDVNIDDVILILVRQLSSEAQINFINEVYRALSVNCNFTMEQDKLMNHIYIPRCLSLQAALGFKDKYTPRSSPSAIPWAILQLRHASVLYAFFFQYNKGAPTESHDPDVLRMVLGNTKWALEFSFYVSNELFDLADEFESMASDQEAFTQKLKSTTSLPLIILLSSMSRAFLRFICRGLRGIHAGYATAAPLTGDARVYYAEIYQTLENSPVRIDAYEKFLAGVDSAVRHAYHSAGFGDAERPGPEKELLVNARVPPVLVSAVATILRQTVPALKSEIDRITIYMGNYSWLGLAHDRRTEMYRRTRDVDIIKKIPLRSLGPYTEVDAAPSGKTNAQGPPQQPQPQQQRRRRCVRCCEISGDTHPPRSLLSFRMIAKLGLLRSCVCGGMWTLVEPEVSAPAADPPVSQATGRTPALMAIGLAGSS</sequence>